<evidence type="ECO:0000269" key="1">
    <source>
    </source>
</evidence>
<evidence type="ECO:0000305" key="2"/>
<feature type="chain" id="PRO_0000057218" description="Lactogenin">
    <location>
        <begin position="1"/>
        <end position="73" status="greater than"/>
    </location>
</feature>
<feature type="modified residue" description="Pyrrolidone carboxylic acid" evidence="1">
    <location>
        <position position="1"/>
    </location>
</feature>
<feature type="unsure residue" description="N or R">
    <location>
        <position position="36"/>
    </location>
</feature>
<feature type="unsure residue" description="R or E">
    <location>
        <position position="37"/>
    </location>
</feature>
<feature type="unsure residue" description="H or Q">
    <location>
        <position position="38"/>
    </location>
</feature>
<feature type="unsure residue" description="E or C">
    <location>
        <position position="39"/>
    </location>
</feature>
<feature type="unsure residue" description="G or R">
    <location>
        <position position="40"/>
    </location>
</feature>
<feature type="unsure residue" description="V or N">
    <location>
        <position position="41"/>
    </location>
</feature>
<feature type="unsure residue" description="R or C">
    <location>
        <position position="42"/>
    </location>
</feature>
<feature type="unsure residue" description="F or N">
    <location>
        <position position="43"/>
    </location>
</feature>
<feature type="non-consecutive residues" evidence="2">
    <location>
        <begin position="57"/>
        <end position="58"/>
    </location>
</feature>
<feature type="non-terminal residue">
    <location>
        <position position="73"/>
    </location>
</feature>
<reference key="1">
    <citation type="journal article" date="1999" name="Biochem. Biophys. Res. Commun.">
        <title>Isolation and characterization of angiogenin-1 and a novel protein designated lactogenin from bovine milk.</title>
        <authorList>
            <person name="Ye X.Y."/>
            <person name="Cheng K.J."/>
            <person name="Ng T.B."/>
        </authorList>
    </citation>
    <scope>PROTEIN SEQUENCE</scope>
    <scope>PYROGLUTAMATE FORMATION AT GLN-1</scope>
    <scope>CHARACTERIZATION</scope>
    <source>
        <tissue>Milk</tissue>
    </source>
</reference>
<reference key="2">
    <citation type="journal article" date="2000" name="Life Sci.">
        <title>First demonstration of an inhibitory activity of milk proteins against human immunodeficiency virus-1 reverse transcriptase and the effect of succinylation.</title>
        <authorList>
            <person name="Wang H."/>
            <person name="Ye X.Y."/>
            <person name="Ng T.B."/>
        </authorList>
    </citation>
    <scope>INHIBITION OF HIV-1 REVERSE TRANSCRIPTASE</scope>
</reference>
<proteinExistence type="evidence at protein level"/>
<accession>P59761</accession>
<organism>
    <name type="scientific">Bos taurus</name>
    <name type="common">Bovine</name>
    <dbReference type="NCBI Taxonomy" id="9913"/>
    <lineage>
        <taxon>Eukaryota</taxon>
        <taxon>Metazoa</taxon>
        <taxon>Chordata</taxon>
        <taxon>Craniata</taxon>
        <taxon>Vertebrata</taxon>
        <taxon>Euteleostomi</taxon>
        <taxon>Mammalia</taxon>
        <taxon>Eutheria</taxon>
        <taxon>Laurasiatheria</taxon>
        <taxon>Artiodactyla</taxon>
        <taxon>Ruminantia</taxon>
        <taxon>Pecora</taxon>
        <taxon>Bovidae</taxon>
        <taxon>Bovinae</taxon>
        <taxon>Bos</taxon>
    </lineage>
</organism>
<sequence>QGRMYQRFLRQHVDPDETGGNDHYLNLSRRNIQCPNRHEGVRFNTDIHEDLTNRRPIDEHEGVVRVTDKTEEG</sequence>
<name>LGEN_BOVIN</name>
<dbReference type="EC" id="3.1.27.-"/>
<dbReference type="SMR" id="P59761"/>
<dbReference type="InParanoid" id="P59761"/>
<dbReference type="Proteomes" id="UP000009136">
    <property type="component" value="Unplaced"/>
</dbReference>
<dbReference type="GO" id="GO:0005576">
    <property type="term" value="C:extracellular region"/>
    <property type="evidence" value="ECO:0007669"/>
    <property type="project" value="UniProtKB-SubCell"/>
</dbReference>
<dbReference type="GO" id="GO:0004519">
    <property type="term" value="F:endonuclease activity"/>
    <property type="evidence" value="ECO:0007669"/>
    <property type="project" value="UniProtKB-KW"/>
</dbReference>
<dbReference type="GO" id="GO:0050691">
    <property type="term" value="P:regulation of defense response to virus by host"/>
    <property type="evidence" value="ECO:0000303"/>
    <property type="project" value="UniProtKB"/>
</dbReference>
<dbReference type="Gene3D" id="3.10.130.10">
    <property type="entry name" value="Ribonuclease A-like domain"/>
    <property type="match status" value="1"/>
</dbReference>
<dbReference type="InterPro" id="IPR036816">
    <property type="entry name" value="RNaseA-like_dom_sf"/>
</dbReference>
<dbReference type="SUPFAM" id="SSF54076">
    <property type="entry name" value="RNase A-like"/>
    <property type="match status" value="1"/>
</dbReference>
<protein>
    <recommendedName>
        <fullName>Lactogenin</fullName>
        <ecNumber>3.1.27.-</ecNumber>
    </recommendedName>
</protein>
<comment type="function">
    <text>Secretory RNase specific towards pyrimidine bases, with higher activity towards poly C than poly U. Inhibits cell-free translation.</text>
</comment>
<comment type="subcellular location">
    <subcellularLocation>
        <location>Secreted</location>
    </subcellularLocation>
</comment>
<comment type="tissue specificity">
    <text>Milk.</text>
</comment>
<comment type="miscellaneous">
    <text>Inhibits HIV-1 reverse transcriptase in vitro.</text>
</comment>
<comment type="similarity">
    <text evidence="2">Belongs to the pancreatic ribonuclease family.</text>
</comment>
<keyword id="KW-0930">Antiviral protein</keyword>
<keyword id="KW-0903">Direct protein sequencing</keyword>
<keyword id="KW-0255">Endonuclease</keyword>
<keyword id="KW-0378">Hydrolase</keyword>
<keyword id="KW-0540">Nuclease</keyword>
<keyword id="KW-0873">Pyrrolidone carboxylic acid</keyword>
<keyword id="KW-1185">Reference proteome</keyword>
<keyword id="KW-0964">Secreted</keyword>